<proteinExistence type="inferred from homology"/>
<keyword id="KW-0159">Chromosome partition</keyword>
<keyword id="KW-0238">DNA-binding</keyword>
<keyword id="KW-1185">Reference proteome</keyword>
<organism>
    <name type="scientific">Vibrio cholerae serotype O1 (strain ATCC 39315 / El Tor Inaba N16961)</name>
    <dbReference type="NCBI Taxonomy" id="243277"/>
    <lineage>
        <taxon>Bacteria</taxon>
        <taxon>Pseudomonadati</taxon>
        <taxon>Pseudomonadota</taxon>
        <taxon>Gammaproteobacteria</taxon>
        <taxon>Vibrionales</taxon>
        <taxon>Vibrionaceae</taxon>
        <taxon>Vibrio</taxon>
    </lineage>
</organism>
<protein>
    <recommendedName>
        <fullName>Probable chromosome-partitioning protein ParB</fullName>
    </recommendedName>
</protein>
<sequence>MTKRGLGKGLDALLATSSLAREKQQVASLSQSMSAEGELADLSISNLKPGIYQPRKDLSPEALEELAASIQSQGIIQPIVVRHLPTGGYEIIAGERRWRAAKQAGLKQVPCLIKQVEDRGAIAMALIENIQREDLNAMEEAQALERLQNEFNLTHQQVAEVIGKSRTTVTNLLRLNQLSDDVKRLLETKQLEMGHARALLMLEGEQQVEIAQQVAKKQLTVRQTEQLVKKCLSDPSDAKNVSEDLEIQQLSQNLSEKLAAKVSIVRTPNGKSKVTISLDEPHKLELLIAKLQN</sequence>
<name>PARB_VIBCH</name>
<evidence type="ECO:0000250" key="1"/>
<evidence type="ECO:0000305" key="2"/>
<feature type="chain" id="PRO_0000178693" description="Probable chromosome-partitioning protein ParB">
    <location>
        <begin position="1"/>
        <end position="293"/>
    </location>
</feature>
<comment type="function">
    <text evidence="1">Involved in chromosome partition. Localize to both poles of the predivisional cell following completion of DNA replication. Binds to the DNA origin of replication (By similarity).</text>
</comment>
<comment type="similarity">
    <text evidence="2">Belongs to the ParB family.</text>
</comment>
<reference key="1">
    <citation type="journal article" date="2000" name="Nature">
        <title>DNA sequence of both chromosomes of the cholera pathogen Vibrio cholerae.</title>
        <authorList>
            <person name="Heidelberg J.F."/>
            <person name="Eisen J.A."/>
            <person name="Nelson W.C."/>
            <person name="Clayton R.A."/>
            <person name="Gwinn M.L."/>
            <person name="Dodson R.J."/>
            <person name="Haft D.H."/>
            <person name="Hickey E.K."/>
            <person name="Peterson J.D."/>
            <person name="Umayam L.A."/>
            <person name="Gill S.R."/>
            <person name="Nelson K.E."/>
            <person name="Read T.D."/>
            <person name="Tettelin H."/>
            <person name="Richardson D.L."/>
            <person name="Ermolaeva M.D."/>
            <person name="Vamathevan J.J."/>
            <person name="Bass S."/>
            <person name="Qin H."/>
            <person name="Dragoi I."/>
            <person name="Sellers P."/>
            <person name="McDonald L.A."/>
            <person name="Utterback T.R."/>
            <person name="Fleischmann R.D."/>
            <person name="Nierman W.C."/>
            <person name="White O."/>
            <person name="Salzberg S.L."/>
            <person name="Smith H.O."/>
            <person name="Colwell R.R."/>
            <person name="Mekalanos J.J."/>
            <person name="Venter J.C."/>
            <person name="Fraser C.M."/>
        </authorList>
    </citation>
    <scope>NUCLEOTIDE SEQUENCE [LARGE SCALE GENOMIC DNA]</scope>
    <source>
        <strain>ATCC 39315 / El Tor Inaba N16961</strain>
    </source>
</reference>
<accession>Q9KNG7</accession>
<dbReference type="EMBL" id="AE003852">
    <property type="protein sequence ID" value="AAF95911.1"/>
    <property type="molecule type" value="Genomic_DNA"/>
</dbReference>
<dbReference type="PIR" id="D82035">
    <property type="entry name" value="D82035"/>
</dbReference>
<dbReference type="RefSeq" id="NP_232398.1">
    <property type="nucleotide sequence ID" value="NC_002505.1"/>
</dbReference>
<dbReference type="RefSeq" id="WP_000166627.1">
    <property type="nucleotide sequence ID" value="NZ_LT906614.1"/>
</dbReference>
<dbReference type="SMR" id="Q9KNG7"/>
<dbReference type="STRING" id="243277.VC_2772"/>
<dbReference type="DNASU" id="2614949"/>
<dbReference type="EnsemblBacteria" id="AAF95911">
    <property type="protein sequence ID" value="AAF95911"/>
    <property type="gene ID" value="VC_2772"/>
</dbReference>
<dbReference type="KEGG" id="vch:VC_2772"/>
<dbReference type="PATRIC" id="fig|243277.26.peg.2647"/>
<dbReference type="eggNOG" id="COG1475">
    <property type="taxonomic scope" value="Bacteria"/>
</dbReference>
<dbReference type="HOGENOM" id="CLU_023853_0_0_6"/>
<dbReference type="Proteomes" id="UP000000584">
    <property type="component" value="Chromosome 1"/>
</dbReference>
<dbReference type="GO" id="GO:0005694">
    <property type="term" value="C:chromosome"/>
    <property type="evidence" value="ECO:0000318"/>
    <property type="project" value="GO_Central"/>
</dbReference>
<dbReference type="GO" id="GO:0003677">
    <property type="term" value="F:DNA binding"/>
    <property type="evidence" value="ECO:0007669"/>
    <property type="project" value="UniProtKB-KW"/>
</dbReference>
<dbReference type="GO" id="GO:0007059">
    <property type="term" value="P:chromosome segregation"/>
    <property type="evidence" value="ECO:0000318"/>
    <property type="project" value="GO_Central"/>
</dbReference>
<dbReference type="GO" id="GO:0045881">
    <property type="term" value="P:positive regulation of sporulation resulting in formation of a cellular spore"/>
    <property type="evidence" value="ECO:0000318"/>
    <property type="project" value="GO_Central"/>
</dbReference>
<dbReference type="CDD" id="cd16393">
    <property type="entry name" value="SPO0J_N"/>
    <property type="match status" value="1"/>
</dbReference>
<dbReference type="FunFam" id="1.10.10.2830:FF:000001">
    <property type="entry name" value="Chromosome partitioning protein ParB"/>
    <property type="match status" value="1"/>
</dbReference>
<dbReference type="FunFam" id="3.90.1530.30:FF:000001">
    <property type="entry name" value="Chromosome partitioning protein ParB"/>
    <property type="match status" value="1"/>
</dbReference>
<dbReference type="Gene3D" id="1.10.10.2830">
    <property type="match status" value="1"/>
</dbReference>
<dbReference type="Gene3D" id="3.90.1530.30">
    <property type="match status" value="1"/>
</dbReference>
<dbReference type="InterPro" id="IPR050336">
    <property type="entry name" value="Chromosome_partition/occlusion"/>
</dbReference>
<dbReference type="InterPro" id="IPR041468">
    <property type="entry name" value="HTH_ParB/Spo0J"/>
</dbReference>
<dbReference type="InterPro" id="IPR004437">
    <property type="entry name" value="ParB/RepB/Spo0J"/>
</dbReference>
<dbReference type="InterPro" id="IPR003115">
    <property type="entry name" value="ParB/Sulfiredoxin_dom"/>
</dbReference>
<dbReference type="InterPro" id="IPR036086">
    <property type="entry name" value="ParB/Sulfiredoxin_sf"/>
</dbReference>
<dbReference type="InterPro" id="IPR057240">
    <property type="entry name" value="ParB_dimer_C"/>
</dbReference>
<dbReference type="NCBIfam" id="TIGR00180">
    <property type="entry name" value="parB_part"/>
    <property type="match status" value="1"/>
</dbReference>
<dbReference type="PANTHER" id="PTHR33375">
    <property type="entry name" value="CHROMOSOME-PARTITIONING PROTEIN PARB-RELATED"/>
    <property type="match status" value="1"/>
</dbReference>
<dbReference type="PANTHER" id="PTHR33375:SF1">
    <property type="entry name" value="CHROMOSOME-PARTITIONING PROTEIN PARB-RELATED"/>
    <property type="match status" value="1"/>
</dbReference>
<dbReference type="Pfam" id="PF17762">
    <property type="entry name" value="HTH_ParB"/>
    <property type="match status" value="1"/>
</dbReference>
<dbReference type="Pfam" id="PF23552">
    <property type="entry name" value="ParB_dimer"/>
    <property type="match status" value="1"/>
</dbReference>
<dbReference type="Pfam" id="PF02195">
    <property type="entry name" value="ParBc"/>
    <property type="match status" value="1"/>
</dbReference>
<dbReference type="SMART" id="SM00470">
    <property type="entry name" value="ParB"/>
    <property type="match status" value="1"/>
</dbReference>
<dbReference type="SUPFAM" id="SSF109709">
    <property type="entry name" value="KorB DNA-binding domain-like"/>
    <property type="match status" value="1"/>
</dbReference>
<dbReference type="SUPFAM" id="SSF110849">
    <property type="entry name" value="ParB/Sulfiredoxin"/>
    <property type="match status" value="1"/>
</dbReference>
<gene>
    <name type="primary">parB</name>
    <name type="ordered locus">VC_2772</name>
</gene>